<sequence length="361" mass="40194">MTPTVTVQLTDDTAKRFEGHAKLLAIGTATPTNWVDQATYPDFYFRITNSEHLLEHKEKFRRICNKSKIRKRHLVLTEELLKENPNLCTYNDASLNTRQDILVSEVPKLGKEAAMKAIKEWGRPISEITHLVFCTTSGVDMPGADFQLTKLLGLNSSVKRLMMYQQGCNAGAAMLRLVKGLAENNKGARVLVVCSGITINIFRGPSLEQDDNLLAQCLFGDGSAAMIDGKDPRPGLETPLFELVSSAQTIVPNTDSHLKLHLREMGLTFHCSRAVPSVLAENVEDCLVKAFEPYGISDWNSIFWVFHPGGNAIVDRVEERSGLGPERLRASRDVLSEYGNLTSACVLFILDEMRKKSKKDE</sequence>
<accession>P48393</accession>
<comment type="function">
    <text>The primary product of this enzyme is 4,2',4',6'-tetrahydroxychalcone (also termed naringenin-chalcone or chalcone) which can under specific conditions spontaneously isomerize into naringenin.</text>
</comment>
<comment type="catalytic activity">
    <reaction evidence="1">
        <text>(E)-4-coumaroyl-CoA + 3 malonyl-CoA + 3 H(+) = 2',4,4',6'-tetrahydroxychalcone + 3 CO2 + 4 CoA</text>
        <dbReference type="Rhea" id="RHEA:11128"/>
        <dbReference type="ChEBI" id="CHEBI:15378"/>
        <dbReference type="ChEBI" id="CHEBI:15413"/>
        <dbReference type="ChEBI" id="CHEBI:16526"/>
        <dbReference type="ChEBI" id="CHEBI:57287"/>
        <dbReference type="ChEBI" id="CHEBI:57384"/>
        <dbReference type="ChEBI" id="CHEBI:85008"/>
        <dbReference type="EC" id="2.3.1.74"/>
    </reaction>
</comment>
<comment type="pathway">
    <text>Secondary metabolite biosynthesis; flavonoid biosynthesis.</text>
</comment>
<comment type="similarity">
    <text evidence="2">Belongs to the thiolase-like superfamily. Chalcone/stilbene synthases family.</text>
</comment>
<name>CHSA_IPOCO</name>
<keyword id="KW-0012">Acyltransferase</keyword>
<keyword id="KW-0284">Flavonoid biosynthesis</keyword>
<keyword id="KW-0808">Transferase</keyword>
<evidence type="ECO:0000255" key="1">
    <source>
        <dbReference type="PROSITE-ProRule" id="PRU10023"/>
    </source>
</evidence>
<evidence type="ECO:0000305" key="2"/>
<protein>
    <recommendedName>
        <fullName>Chalcone synthase A</fullName>
        <ecNumber>2.3.1.74</ecNumber>
    </recommendedName>
    <alternativeName>
        <fullName>Naringenin-chalcone synthase A</fullName>
        <shortName>CHS-A</shortName>
    </alternativeName>
</protein>
<feature type="chain" id="PRO_0000215990" description="Chalcone synthase A">
    <location>
        <begin position="1"/>
        <end position="361" status="greater than"/>
    </location>
</feature>
<feature type="active site" evidence="1">
    <location>
        <position position="168"/>
    </location>
</feature>
<feature type="non-terminal residue">
    <location>
        <position position="361"/>
    </location>
</feature>
<reference key="1">
    <citation type="journal article" date="1995" name="Proc. Natl. Acad. Sci. U.S.A.">
        <title>Evolution of the chalcone synthase gene family in the genus Ipomoea.</title>
        <authorList>
            <person name="Durbin M.L."/>
            <person name="Learn G.H."/>
            <person name="Huttley G.A."/>
            <person name="Clegg M.T."/>
        </authorList>
    </citation>
    <scope>NUCLEOTIDE SEQUENCE [GENOMIC DNA]</scope>
</reference>
<proteinExistence type="inferred from homology"/>
<organism>
    <name type="scientific">Ipomoea cordatotriloba</name>
    <name type="common">Tievine</name>
    <dbReference type="NCBI Taxonomy" id="35882"/>
    <lineage>
        <taxon>Eukaryota</taxon>
        <taxon>Viridiplantae</taxon>
        <taxon>Streptophyta</taxon>
        <taxon>Embryophyta</taxon>
        <taxon>Tracheophyta</taxon>
        <taxon>Spermatophyta</taxon>
        <taxon>Magnoliopsida</taxon>
        <taxon>eudicotyledons</taxon>
        <taxon>Gunneridae</taxon>
        <taxon>Pentapetalae</taxon>
        <taxon>asterids</taxon>
        <taxon>lamiids</taxon>
        <taxon>Solanales</taxon>
        <taxon>Convolvulaceae</taxon>
        <taxon>Ipomoeeae</taxon>
        <taxon>Ipomoea</taxon>
    </lineage>
</organism>
<dbReference type="EC" id="2.3.1.74"/>
<dbReference type="EMBL" id="U15941">
    <property type="protein sequence ID" value="AAC49026.1"/>
    <property type="molecule type" value="Genomic_DNA"/>
</dbReference>
<dbReference type="SMR" id="P48393"/>
<dbReference type="UniPathway" id="UPA00154"/>
<dbReference type="GO" id="GO:0016210">
    <property type="term" value="F:naringenin-chalcone synthase activity"/>
    <property type="evidence" value="ECO:0007669"/>
    <property type="project" value="UniProtKB-EC"/>
</dbReference>
<dbReference type="GO" id="GO:0009813">
    <property type="term" value="P:flavonoid biosynthetic process"/>
    <property type="evidence" value="ECO:0007669"/>
    <property type="project" value="UniProtKB-UniPathway"/>
</dbReference>
<dbReference type="GO" id="GO:0030639">
    <property type="term" value="P:polyketide biosynthetic process"/>
    <property type="evidence" value="ECO:0007669"/>
    <property type="project" value="TreeGrafter"/>
</dbReference>
<dbReference type="CDD" id="cd00831">
    <property type="entry name" value="CHS_like"/>
    <property type="match status" value="1"/>
</dbReference>
<dbReference type="FunFam" id="3.40.47.10:FF:000014">
    <property type="entry name" value="Chalcone synthase 1"/>
    <property type="match status" value="1"/>
</dbReference>
<dbReference type="FunFam" id="3.40.47.10:FF:000025">
    <property type="entry name" value="Chalcone synthase 2"/>
    <property type="match status" value="1"/>
</dbReference>
<dbReference type="Gene3D" id="3.40.47.10">
    <property type="match status" value="2"/>
</dbReference>
<dbReference type="InterPro" id="IPR012328">
    <property type="entry name" value="Chalcone/stilbene_synt_C"/>
</dbReference>
<dbReference type="InterPro" id="IPR001099">
    <property type="entry name" value="Chalcone/stilbene_synt_N"/>
</dbReference>
<dbReference type="InterPro" id="IPR018088">
    <property type="entry name" value="Chalcone/stilbene_synthase_AS"/>
</dbReference>
<dbReference type="InterPro" id="IPR011141">
    <property type="entry name" value="Polyketide_synthase_type-III"/>
</dbReference>
<dbReference type="InterPro" id="IPR016039">
    <property type="entry name" value="Thiolase-like"/>
</dbReference>
<dbReference type="PANTHER" id="PTHR11877:SF104">
    <property type="entry name" value="CHALCONE SYNTHASE"/>
    <property type="match status" value="1"/>
</dbReference>
<dbReference type="PANTHER" id="PTHR11877">
    <property type="entry name" value="HYDROXYMETHYLGLUTARYL-COA SYNTHASE"/>
    <property type="match status" value="1"/>
</dbReference>
<dbReference type="Pfam" id="PF02797">
    <property type="entry name" value="Chal_sti_synt_C"/>
    <property type="match status" value="1"/>
</dbReference>
<dbReference type="Pfam" id="PF00195">
    <property type="entry name" value="Chal_sti_synt_N"/>
    <property type="match status" value="1"/>
</dbReference>
<dbReference type="PIRSF" id="PIRSF000451">
    <property type="entry name" value="PKS_III"/>
    <property type="match status" value="1"/>
</dbReference>
<dbReference type="SUPFAM" id="SSF53901">
    <property type="entry name" value="Thiolase-like"/>
    <property type="match status" value="2"/>
</dbReference>
<dbReference type="PROSITE" id="PS00441">
    <property type="entry name" value="CHALCONE_SYNTH"/>
    <property type="match status" value="1"/>
</dbReference>
<gene>
    <name type="primary">CHSA</name>
</gene>